<feature type="chain" id="PRO_0000162238" description="Pyruvate dehydrogenase E1 component">
    <location>
        <begin position="1"/>
        <end position="895"/>
    </location>
</feature>
<feature type="region of interest" description="Disordered" evidence="2">
    <location>
        <begin position="1"/>
        <end position="20"/>
    </location>
</feature>
<evidence type="ECO:0000250" key="1"/>
<evidence type="ECO:0000256" key="2">
    <source>
        <dbReference type="SAM" id="MobiDB-lite"/>
    </source>
</evidence>
<protein>
    <recommendedName>
        <fullName>Pyruvate dehydrogenase E1 component</fullName>
        <shortName>PDH E1 component</shortName>
        <ecNumber>1.2.4.1</ecNumber>
    </recommendedName>
</protein>
<reference key="1">
    <citation type="journal article" date="1994" name="J. Bacteriol.">
        <title>Biochemical and molecular characterization of the Alcaligenes eutrophus pyruvate dehydrogenase complex and identification of a new type of dihydrolipoamide dehydrogenase.</title>
        <authorList>
            <person name="Hein S."/>
            <person name="Steinbuechel A."/>
        </authorList>
    </citation>
    <scope>NUCLEOTIDE SEQUENCE [GENOMIC DNA]</scope>
</reference>
<reference key="2">
    <citation type="journal article" date="2006" name="Nat. Biotechnol.">
        <title>Genome sequence of the bioplastic-producing 'Knallgas' bacterium Ralstonia eutropha H16.</title>
        <authorList>
            <person name="Pohlmann A."/>
            <person name="Fricke W.F."/>
            <person name="Reinecke F."/>
            <person name="Kusian B."/>
            <person name="Liesegang H."/>
            <person name="Cramm R."/>
            <person name="Eitinger T."/>
            <person name="Ewering C."/>
            <person name="Poetter M."/>
            <person name="Schwartz E."/>
            <person name="Strittmatter A."/>
            <person name="Voss I."/>
            <person name="Gottschalk G."/>
            <person name="Steinbuechel A."/>
            <person name="Friedrich B."/>
            <person name="Bowien B."/>
        </authorList>
    </citation>
    <scope>NUCLEOTIDE SEQUENCE [LARGE SCALE GENOMIC DNA]</scope>
    <source>
        <strain>ATCC 17699 / DSM 428 / KCTC 22496 / NCIMB 10442 / H16 / Stanier 337</strain>
    </source>
</reference>
<name>ODP1_CUPNH</name>
<keyword id="KW-0560">Oxidoreductase</keyword>
<keyword id="KW-0670">Pyruvate</keyword>
<keyword id="KW-1185">Reference proteome</keyword>
<keyword id="KW-0786">Thiamine pyrophosphate</keyword>
<comment type="function">
    <text evidence="1">Component of the pyruvate dehydrogenase (PDH) complex, that catalyzes the overall conversion of pyruvate to acetyl-CoA and CO(2).</text>
</comment>
<comment type="catalytic activity">
    <reaction>
        <text>N(6)-[(R)-lipoyl]-L-lysyl-[protein] + pyruvate + H(+) = N(6)-[(R)-S(8)-acetyldihydrolipoyl]-L-lysyl-[protein] + CO2</text>
        <dbReference type="Rhea" id="RHEA:19189"/>
        <dbReference type="Rhea" id="RHEA-COMP:10474"/>
        <dbReference type="Rhea" id="RHEA-COMP:10478"/>
        <dbReference type="ChEBI" id="CHEBI:15361"/>
        <dbReference type="ChEBI" id="CHEBI:15378"/>
        <dbReference type="ChEBI" id="CHEBI:16526"/>
        <dbReference type="ChEBI" id="CHEBI:83099"/>
        <dbReference type="ChEBI" id="CHEBI:83111"/>
        <dbReference type="EC" id="1.2.4.1"/>
    </reaction>
</comment>
<comment type="cofactor">
    <cofactor evidence="1">
        <name>thiamine diphosphate</name>
        <dbReference type="ChEBI" id="CHEBI:58937"/>
    </cofactor>
</comment>
<comment type="subunit">
    <text evidence="1">Homodimer. Part of the PDH complex, consisting of multiple copies of pyruvate dehydrogenase (E1), dihydrolipoamide acetyltransferase (E2) and lipoamide dehydrogenase (E3).</text>
</comment>
<dbReference type="EC" id="1.2.4.1"/>
<dbReference type="EMBL" id="U09865">
    <property type="protein sequence ID" value="AAA21598.1"/>
    <property type="molecule type" value="Genomic_DNA"/>
</dbReference>
<dbReference type="EMBL" id="AM260479">
    <property type="protein sequence ID" value="CAJ92510.1"/>
    <property type="molecule type" value="Genomic_DNA"/>
</dbReference>
<dbReference type="PIR" id="A55514">
    <property type="entry name" value="A55514"/>
</dbReference>
<dbReference type="RefSeq" id="WP_011615027.1">
    <property type="nucleotide sequence ID" value="NC_008313.1"/>
</dbReference>
<dbReference type="SMR" id="Q59097"/>
<dbReference type="STRING" id="381666.H16_A1374"/>
<dbReference type="KEGG" id="reh:H16_A1374"/>
<dbReference type="PATRIC" id="fig|381666.6.peg.1763"/>
<dbReference type="eggNOG" id="COG2609">
    <property type="taxonomic scope" value="Bacteria"/>
</dbReference>
<dbReference type="HOGENOM" id="CLU_009154_2_0_4"/>
<dbReference type="OrthoDB" id="9759664at2"/>
<dbReference type="Proteomes" id="UP000008210">
    <property type="component" value="Chromosome 1"/>
</dbReference>
<dbReference type="GO" id="GO:0004739">
    <property type="term" value="F:pyruvate dehydrogenase (acetyl-transferring) activity"/>
    <property type="evidence" value="ECO:0007669"/>
    <property type="project" value="UniProtKB-EC"/>
</dbReference>
<dbReference type="CDD" id="cd02017">
    <property type="entry name" value="TPP_E1_EcPDC_like"/>
    <property type="match status" value="1"/>
</dbReference>
<dbReference type="FunFam" id="3.40.50.970:FF:000011">
    <property type="entry name" value="Pyruvate dehydrogenase E1 component"/>
    <property type="match status" value="1"/>
</dbReference>
<dbReference type="Gene3D" id="3.40.50.920">
    <property type="match status" value="1"/>
</dbReference>
<dbReference type="Gene3D" id="3.40.50.970">
    <property type="match status" value="2"/>
</dbReference>
<dbReference type="InterPro" id="IPR035807">
    <property type="entry name" value="PDC_E1_N"/>
</dbReference>
<dbReference type="InterPro" id="IPR051157">
    <property type="entry name" value="PDH/Transketolase"/>
</dbReference>
<dbReference type="InterPro" id="IPR004660">
    <property type="entry name" value="PDH_E1"/>
</dbReference>
<dbReference type="InterPro" id="IPR041621">
    <property type="entry name" value="PDH_E1_M"/>
</dbReference>
<dbReference type="InterPro" id="IPR029061">
    <property type="entry name" value="THDP-binding"/>
</dbReference>
<dbReference type="InterPro" id="IPR009014">
    <property type="entry name" value="Transketo_C/PFOR_II"/>
</dbReference>
<dbReference type="InterPro" id="IPR055152">
    <property type="entry name" value="Transketolase-like_C_2"/>
</dbReference>
<dbReference type="InterPro" id="IPR005474">
    <property type="entry name" value="Transketolase_N"/>
</dbReference>
<dbReference type="NCBIfam" id="TIGR00759">
    <property type="entry name" value="aceE"/>
    <property type="match status" value="1"/>
</dbReference>
<dbReference type="PANTHER" id="PTHR43825">
    <property type="entry name" value="PYRUVATE DEHYDROGENASE E1 COMPONENT"/>
    <property type="match status" value="1"/>
</dbReference>
<dbReference type="PANTHER" id="PTHR43825:SF3">
    <property type="entry name" value="PYRUVATE DEHYDROGENASE E1 COMPONENT"/>
    <property type="match status" value="1"/>
</dbReference>
<dbReference type="Pfam" id="PF17831">
    <property type="entry name" value="PDH_E1_M"/>
    <property type="match status" value="1"/>
</dbReference>
<dbReference type="Pfam" id="PF22613">
    <property type="entry name" value="Transketolase_C_1"/>
    <property type="match status" value="1"/>
</dbReference>
<dbReference type="Pfam" id="PF00456">
    <property type="entry name" value="Transketolase_N"/>
    <property type="match status" value="1"/>
</dbReference>
<dbReference type="PIRSF" id="PIRSF000156">
    <property type="entry name" value="Pyruvate_dh_E1"/>
    <property type="match status" value="1"/>
</dbReference>
<dbReference type="SUPFAM" id="SSF52518">
    <property type="entry name" value="Thiamin diphosphate-binding fold (THDP-binding)"/>
    <property type="match status" value="2"/>
</dbReference>
<dbReference type="SUPFAM" id="SSF52922">
    <property type="entry name" value="TK C-terminal domain-like"/>
    <property type="match status" value="1"/>
</dbReference>
<organism>
    <name type="scientific">Cupriavidus necator (strain ATCC 17699 / DSM 428 / KCTC 22496 / NCIMB 10442 / H16 / Stanier 337)</name>
    <name type="common">Ralstonia eutropha</name>
    <dbReference type="NCBI Taxonomy" id="381666"/>
    <lineage>
        <taxon>Bacteria</taxon>
        <taxon>Pseudomonadati</taxon>
        <taxon>Pseudomonadota</taxon>
        <taxon>Betaproteobacteria</taxon>
        <taxon>Burkholderiales</taxon>
        <taxon>Burkholderiaceae</taxon>
        <taxon>Cupriavidus</taxon>
    </lineage>
</organism>
<proteinExistence type="inferred from homology"/>
<gene>
    <name type="primary">pdhA</name>
    <name type="ordered locus">H16_A1374</name>
</gene>
<sequence>MSAVPEQILGASSANDADPQETHEWLDALQGVLAAEGPARAAFLIDKQIEYARVNGVTQPFHAETQYINTIPVEQQARIPGDQDIEHRIRSYTRWNAMAMVLRANKHTNVGGHISSFASAATLYDVGYNHFWRAPSEAGGGDLVFVQGHSAPGVYSRAFLLGRLTQDQLDNFRQEVDGKGISSYPHPWLMPDFWQFPTVSMGLGPIMAIYQARFMKYLDSRGLAKAGDRKVWAFLGDGETDEPESLGAIGMAGREKLDNLVFVINCNLQRLDGPVRGNGKIIQELESEFRGAGWNVIKVVWGSKWDSLLARDTKGLLMKRMMECVDGEYQTMKAKDGAYVREHFFNTPELKAMVADWSDDDIWRLNRGGHDPHKIYAAYKAASEHKGQPTLILAKTIKGYGMGDAGQAMNVAHQQKKMPVDAIRKFRDQFNLPVADDQLEEVPYITFPEGSKELEYMRQARQNLGGYLPARRQKAEALPVPQLSAFDALLKATGEGREVSTTMAFVRILNTLLKDKQIGKHVVPIVPDESRTFGMEGLFRQVGIWNQEGQKYVPEDHDQLMFYKESQTGQVLQEGINEAGAMCDWIAAATSYSTHGVQMIPFYIYYSMFGIQRIGDLCWAAADMRSRGFLLGGTAGRTTLNGEGLQHEDGHSHVFHAAIPNCISYDPTFQYELAVVMQDGLRRMYAEQEDVYYYLTVMNENYEHPEMPAGVEQDIVKGMYQFRKGVENSNAPRVQLLGSGTIFREVIAAADLLKKDWGVESDLWGCPSFTELAREGHDVERFNLLHPTETPRESHVAKSLKSARGPVIASTDYVRAFAEQIRPFVPRRYVVLGTDGFGRSDTREKLRHFFEVDRYWVTLAALKALADEGAIGRDKVAEAIKKYNLDPNKPNPMSV</sequence>
<accession>Q59097</accession>
<accession>Q0KBW1</accession>